<accession>Q8PUL7</accession>
<organism>
    <name type="scientific">Methanosarcina mazei (strain ATCC BAA-159 / DSM 3647 / Goe1 / Go1 / JCM 11833 / OCM 88)</name>
    <name type="common">Methanosarcina frisia</name>
    <dbReference type="NCBI Taxonomy" id="192952"/>
    <lineage>
        <taxon>Archaea</taxon>
        <taxon>Methanobacteriati</taxon>
        <taxon>Methanobacteriota</taxon>
        <taxon>Stenosarchaea group</taxon>
        <taxon>Methanomicrobia</taxon>
        <taxon>Methanosarcinales</taxon>
        <taxon>Methanosarcinaceae</taxon>
        <taxon>Methanosarcina</taxon>
    </lineage>
</organism>
<protein>
    <recommendedName>
        <fullName evidence="1">Hydrogenase maturation factor HypA</fullName>
    </recommendedName>
</protein>
<comment type="function">
    <text evidence="1">Involved in the maturation of [NiFe] hydrogenases. Required for nickel insertion into the metal center of the hydrogenase.</text>
</comment>
<comment type="similarity">
    <text evidence="1">Belongs to the HypA/HybF family.</text>
</comment>
<feature type="chain" id="PRO_0000129079" description="Hydrogenase maturation factor HypA">
    <location>
        <begin position="1"/>
        <end position="137"/>
    </location>
</feature>
<feature type="binding site" evidence="1">
    <location>
        <position position="2"/>
    </location>
    <ligand>
        <name>Ni(2+)</name>
        <dbReference type="ChEBI" id="CHEBI:49786"/>
    </ligand>
</feature>
<feature type="binding site" evidence="1">
    <location>
        <position position="73"/>
    </location>
    <ligand>
        <name>Zn(2+)</name>
        <dbReference type="ChEBI" id="CHEBI:29105"/>
    </ligand>
</feature>
<feature type="binding site" evidence="1">
    <location>
        <position position="75"/>
    </location>
    <ligand>
        <name>Zn(2+)</name>
        <dbReference type="ChEBI" id="CHEBI:29105"/>
    </ligand>
</feature>
<feature type="binding site" evidence="1">
    <location>
        <position position="105"/>
    </location>
    <ligand>
        <name>Zn(2+)</name>
        <dbReference type="ChEBI" id="CHEBI:29105"/>
    </ligand>
</feature>
<feature type="binding site" evidence="1">
    <location>
        <position position="108"/>
    </location>
    <ligand>
        <name>Zn(2+)</name>
        <dbReference type="ChEBI" id="CHEBI:29105"/>
    </ligand>
</feature>
<gene>
    <name evidence="1" type="primary">hypA</name>
    <name type="ordered locus">MM_2317</name>
</gene>
<evidence type="ECO:0000255" key="1">
    <source>
        <dbReference type="HAMAP-Rule" id="MF_00213"/>
    </source>
</evidence>
<keyword id="KW-0479">Metal-binding</keyword>
<keyword id="KW-0533">Nickel</keyword>
<keyword id="KW-0862">Zinc</keyword>
<dbReference type="EMBL" id="AE008384">
    <property type="protein sequence ID" value="AAM32013.1"/>
    <property type="molecule type" value="Genomic_DNA"/>
</dbReference>
<dbReference type="RefSeq" id="WP_011034241.1">
    <property type="nucleotide sequence ID" value="NC_003901.1"/>
</dbReference>
<dbReference type="SMR" id="Q8PUL7"/>
<dbReference type="GeneID" id="82161391"/>
<dbReference type="KEGG" id="mma:MM_2317"/>
<dbReference type="PATRIC" id="fig|192952.21.peg.2653"/>
<dbReference type="eggNOG" id="arCOG04426">
    <property type="taxonomic scope" value="Archaea"/>
</dbReference>
<dbReference type="HOGENOM" id="CLU_126929_4_0_2"/>
<dbReference type="Proteomes" id="UP000000595">
    <property type="component" value="Chromosome"/>
</dbReference>
<dbReference type="GO" id="GO:0016151">
    <property type="term" value="F:nickel cation binding"/>
    <property type="evidence" value="ECO:0007669"/>
    <property type="project" value="UniProtKB-UniRule"/>
</dbReference>
<dbReference type="GO" id="GO:0008270">
    <property type="term" value="F:zinc ion binding"/>
    <property type="evidence" value="ECO:0007669"/>
    <property type="project" value="UniProtKB-UniRule"/>
</dbReference>
<dbReference type="GO" id="GO:0051604">
    <property type="term" value="P:protein maturation"/>
    <property type="evidence" value="ECO:0007669"/>
    <property type="project" value="InterPro"/>
</dbReference>
<dbReference type="GO" id="GO:0036211">
    <property type="term" value="P:protein modification process"/>
    <property type="evidence" value="ECO:0007669"/>
    <property type="project" value="UniProtKB-UniRule"/>
</dbReference>
<dbReference type="Gene3D" id="3.30.2320.80">
    <property type="match status" value="1"/>
</dbReference>
<dbReference type="HAMAP" id="MF_00213">
    <property type="entry name" value="HypA_HybF"/>
    <property type="match status" value="1"/>
</dbReference>
<dbReference type="InterPro" id="IPR020538">
    <property type="entry name" value="Hydgase_Ni_incorp_HypA/HybF_CS"/>
</dbReference>
<dbReference type="InterPro" id="IPR000688">
    <property type="entry name" value="HypA/HybF"/>
</dbReference>
<dbReference type="NCBIfam" id="TIGR00100">
    <property type="entry name" value="hypA"/>
    <property type="match status" value="1"/>
</dbReference>
<dbReference type="NCBIfam" id="NF001976">
    <property type="entry name" value="PRK00762.1"/>
    <property type="match status" value="1"/>
</dbReference>
<dbReference type="PANTHER" id="PTHR34535">
    <property type="entry name" value="HYDROGENASE MATURATION FACTOR HYPA"/>
    <property type="match status" value="1"/>
</dbReference>
<dbReference type="PANTHER" id="PTHR34535:SF3">
    <property type="entry name" value="HYDROGENASE MATURATION FACTOR HYPA"/>
    <property type="match status" value="1"/>
</dbReference>
<dbReference type="Pfam" id="PF01155">
    <property type="entry name" value="HypA"/>
    <property type="match status" value="1"/>
</dbReference>
<dbReference type="PIRSF" id="PIRSF004761">
    <property type="entry name" value="Hydrgn_mat_HypA"/>
    <property type="match status" value="1"/>
</dbReference>
<dbReference type="PROSITE" id="PS01249">
    <property type="entry name" value="HYPA"/>
    <property type="match status" value="1"/>
</dbReference>
<name>HYPA_METMA</name>
<sequence>MHELSIACEIFEQVKVTAEAHGATEVKHVTLQMGRLSHTNPEQLSFCFKTLAEGSIAENADLIVEMVPPTLECECGYTGTIDQERIRESNELTSELLAYIAAMDCPVCGKQAHIAGGRELIIKSIEIETENENESQR</sequence>
<reference key="1">
    <citation type="journal article" date="2002" name="J. Mol. Microbiol. Biotechnol.">
        <title>The genome of Methanosarcina mazei: evidence for lateral gene transfer between Bacteria and Archaea.</title>
        <authorList>
            <person name="Deppenmeier U."/>
            <person name="Johann A."/>
            <person name="Hartsch T."/>
            <person name="Merkl R."/>
            <person name="Schmitz R.A."/>
            <person name="Martinez-Arias R."/>
            <person name="Henne A."/>
            <person name="Wiezer A."/>
            <person name="Baeumer S."/>
            <person name="Jacobi C."/>
            <person name="Brueggemann H."/>
            <person name="Lienard T."/>
            <person name="Christmann A."/>
            <person name="Boemecke M."/>
            <person name="Steckel S."/>
            <person name="Bhattacharyya A."/>
            <person name="Lykidis A."/>
            <person name="Overbeek R."/>
            <person name="Klenk H.-P."/>
            <person name="Gunsalus R.P."/>
            <person name="Fritz H.-J."/>
            <person name="Gottschalk G."/>
        </authorList>
    </citation>
    <scope>NUCLEOTIDE SEQUENCE [LARGE SCALE GENOMIC DNA]</scope>
    <source>
        <strain>ATCC BAA-159 / DSM 3647 / Goe1 / Go1 / JCM 11833 / OCM 88</strain>
    </source>
</reference>
<proteinExistence type="inferred from homology"/>